<feature type="chain" id="PRO_1000049557" description="Glycerol-3-phosphate dehydrogenase [NAD(P)+]">
    <location>
        <begin position="1"/>
        <end position="339"/>
    </location>
</feature>
<feature type="active site" description="Proton acceptor" evidence="1">
    <location>
        <position position="195"/>
    </location>
</feature>
<feature type="binding site" evidence="1">
    <location>
        <position position="15"/>
    </location>
    <ligand>
        <name>NADPH</name>
        <dbReference type="ChEBI" id="CHEBI:57783"/>
    </ligand>
</feature>
<feature type="binding site" evidence="1">
    <location>
        <position position="16"/>
    </location>
    <ligand>
        <name>NADPH</name>
        <dbReference type="ChEBI" id="CHEBI:57783"/>
    </ligand>
</feature>
<feature type="binding site" evidence="1">
    <location>
        <position position="36"/>
    </location>
    <ligand>
        <name>NADPH</name>
        <dbReference type="ChEBI" id="CHEBI:57783"/>
    </ligand>
</feature>
<feature type="binding site" evidence="1">
    <location>
        <position position="110"/>
    </location>
    <ligand>
        <name>NADPH</name>
        <dbReference type="ChEBI" id="CHEBI:57783"/>
    </ligand>
</feature>
<feature type="binding site" evidence="1">
    <location>
        <position position="110"/>
    </location>
    <ligand>
        <name>sn-glycerol 3-phosphate</name>
        <dbReference type="ChEBI" id="CHEBI:57597"/>
    </ligand>
</feature>
<feature type="binding site" evidence="1">
    <location>
        <position position="139"/>
    </location>
    <ligand>
        <name>sn-glycerol 3-phosphate</name>
        <dbReference type="ChEBI" id="CHEBI:57597"/>
    </ligand>
</feature>
<feature type="binding site" evidence="1">
    <location>
        <position position="141"/>
    </location>
    <ligand>
        <name>sn-glycerol 3-phosphate</name>
        <dbReference type="ChEBI" id="CHEBI:57597"/>
    </ligand>
</feature>
<feature type="binding site" evidence="1">
    <location>
        <position position="143"/>
    </location>
    <ligand>
        <name>NADPH</name>
        <dbReference type="ChEBI" id="CHEBI:57783"/>
    </ligand>
</feature>
<feature type="binding site" evidence="1">
    <location>
        <position position="195"/>
    </location>
    <ligand>
        <name>sn-glycerol 3-phosphate</name>
        <dbReference type="ChEBI" id="CHEBI:57597"/>
    </ligand>
</feature>
<feature type="binding site" evidence="1">
    <location>
        <position position="248"/>
    </location>
    <ligand>
        <name>sn-glycerol 3-phosphate</name>
        <dbReference type="ChEBI" id="CHEBI:57597"/>
    </ligand>
</feature>
<feature type="binding site" evidence="1">
    <location>
        <position position="258"/>
    </location>
    <ligand>
        <name>sn-glycerol 3-phosphate</name>
        <dbReference type="ChEBI" id="CHEBI:57597"/>
    </ligand>
</feature>
<feature type="binding site" evidence="1">
    <location>
        <position position="259"/>
    </location>
    <ligand>
        <name>NADPH</name>
        <dbReference type="ChEBI" id="CHEBI:57783"/>
    </ligand>
</feature>
<feature type="binding site" evidence="1">
    <location>
        <position position="259"/>
    </location>
    <ligand>
        <name>sn-glycerol 3-phosphate</name>
        <dbReference type="ChEBI" id="CHEBI:57597"/>
    </ligand>
</feature>
<feature type="binding site" evidence="1">
    <location>
        <position position="260"/>
    </location>
    <ligand>
        <name>sn-glycerol 3-phosphate</name>
        <dbReference type="ChEBI" id="CHEBI:57597"/>
    </ligand>
</feature>
<feature type="binding site" evidence="1">
    <location>
        <position position="283"/>
    </location>
    <ligand>
        <name>NADPH</name>
        <dbReference type="ChEBI" id="CHEBI:57783"/>
    </ligand>
</feature>
<feature type="binding site" evidence="1">
    <location>
        <position position="285"/>
    </location>
    <ligand>
        <name>NADPH</name>
        <dbReference type="ChEBI" id="CHEBI:57783"/>
    </ligand>
</feature>
<proteinExistence type="inferred from homology"/>
<keyword id="KW-0963">Cytoplasm</keyword>
<keyword id="KW-0444">Lipid biosynthesis</keyword>
<keyword id="KW-0443">Lipid metabolism</keyword>
<keyword id="KW-0520">NAD</keyword>
<keyword id="KW-0521">NADP</keyword>
<keyword id="KW-0547">Nucleotide-binding</keyword>
<keyword id="KW-0560">Oxidoreductase</keyword>
<keyword id="KW-0594">Phospholipid biosynthesis</keyword>
<keyword id="KW-1208">Phospholipid metabolism</keyword>
<gene>
    <name evidence="1" type="primary">gpsA</name>
    <name type="ordered locus">SFV_3923</name>
</gene>
<dbReference type="EC" id="1.1.1.94" evidence="1"/>
<dbReference type="EMBL" id="CP000266">
    <property type="protein sequence ID" value="ABF05931.1"/>
    <property type="molecule type" value="Genomic_DNA"/>
</dbReference>
<dbReference type="RefSeq" id="WP_001076203.1">
    <property type="nucleotide sequence ID" value="NC_008258.1"/>
</dbReference>
<dbReference type="SMR" id="Q0SYD4"/>
<dbReference type="KEGG" id="sfv:SFV_3923"/>
<dbReference type="HOGENOM" id="CLU_033449_0_2_6"/>
<dbReference type="UniPathway" id="UPA00940"/>
<dbReference type="Proteomes" id="UP000000659">
    <property type="component" value="Chromosome"/>
</dbReference>
<dbReference type="GO" id="GO:0005829">
    <property type="term" value="C:cytosol"/>
    <property type="evidence" value="ECO:0007669"/>
    <property type="project" value="TreeGrafter"/>
</dbReference>
<dbReference type="GO" id="GO:0047952">
    <property type="term" value="F:glycerol-3-phosphate dehydrogenase [NAD(P)+] activity"/>
    <property type="evidence" value="ECO:0007669"/>
    <property type="project" value="UniProtKB-UniRule"/>
</dbReference>
<dbReference type="GO" id="GO:0051287">
    <property type="term" value="F:NAD binding"/>
    <property type="evidence" value="ECO:0007669"/>
    <property type="project" value="InterPro"/>
</dbReference>
<dbReference type="GO" id="GO:0005975">
    <property type="term" value="P:carbohydrate metabolic process"/>
    <property type="evidence" value="ECO:0007669"/>
    <property type="project" value="InterPro"/>
</dbReference>
<dbReference type="GO" id="GO:0046167">
    <property type="term" value="P:glycerol-3-phosphate biosynthetic process"/>
    <property type="evidence" value="ECO:0007669"/>
    <property type="project" value="UniProtKB-UniRule"/>
</dbReference>
<dbReference type="GO" id="GO:0046168">
    <property type="term" value="P:glycerol-3-phosphate catabolic process"/>
    <property type="evidence" value="ECO:0007669"/>
    <property type="project" value="InterPro"/>
</dbReference>
<dbReference type="GO" id="GO:0046474">
    <property type="term" value="P:glycerophospholipid biosynthetic process"/>
    <property type="evidence" value="ECO:0007669"/>
    <property type="project" value="TreeGrafter"/>
</dbReference>
<dbReference type="FunFam" id="1.10.1040.10:FF:000001">
    <property type="entry name" value="Glycerol-3-phosphate dehydrogenase [NAD(P)+]"/>
    <property type="match status" value="1"/>
</dbReference>
<dbReference type="FunFam" id="3.40.50.720:FF:000019">
    <property type="entry name" value="Glycerol-3-phosphate dehydrogenase [NAD(P)+]"/>
    <property type="match status" value="1"/>
</dbReference>
<dbReference type="Gene3D" id="1.10.1040.10">
    <property type="entry name" value="N-(1-d-carboxylethyl)-l-norvaline Dehydrogenase, domain 2"/>
    <property type="match status" value="1"/>
</dbReference>
<dbReference type="Gene3D" id="3.40.50.720">
    <property type="entry name" value="NAD(P)-binding Rossmann-like Domain"/>
    <property type="match status" value="1"/>
</dbReference>
<dbReference type="HAMAP" id="MF_00394">
    <property type="entry name" value="NAD_Glyc3P_dehydrog"/>
    <property type="match status" value="1"/>
</dbReference>
<dbReference type="InterPro" id="IPR008927">
    <property type="entry name" value="6-PGluconate_DH-like_C_sf"/>
</dbReference>
<dbReference type="InterPro" id="IPR013328">
    <property type="entry name" value="6PGD_dom2"/>
</dbReference>
<dbReference type="InterPro" id="IPR006168">
    <property type="entry name" value="G3P_DH_NAD-dep"/>
</dbReference>
<dbReference type="InterPro" id="IPR006109">
    <property type="entry name" value="G3P_DH_NAD-dep_C"/>
</dbReference>
<dbReference type="InterPro" id="IPR011128">
    <property type="entry name" value="G3P_DH_NAD-dep_N"/>
</dbReference>
<dbReference type="InterPro" id="IPR036291">
    <property type="entry name" value="NAD(P)-bd_dom_sf"/>
</dbReference>
<dbReference type="NCBIfam" id="NF000939">
    <property type="entry name" value="PRK00094.1-1"/>
    <property type="match status" value="1"/>
</dbReference>
<dbReference type="NCBIfam" id="NF000940">
    <property type="entry name" value="PRK00094.1-2"/>
    <property type="match status" value="1"/>
</dbReference>
<dbReference type="NCBIfam" id="NF000942">
    <property type="entry name" value="PRK00094.1-4"/>
    <property type="match status" value="1"/>
</dbReference>
<dbReference type="PANTHER" id="PTHR11728">
    <property type="entry name" value="GLYCEROL-3-PHOSPHATE DEHYDROGENASE"/>
    <property type="match status" value="1"/>
</dbReference>
<dbReference type="PANTHER" id="PTHR11728:SF1">
    <property type="entry name" value="GLYCEROL-3-PHOSPHATE DEHYDROGENASE [NAD(+)] 2, CHLOROPLASTIC"/>
    <property type="match status" value="1"/>
</dbReference>
<dbReference type="Pfam" id="PF07479">
    <property type="entry name" value="NAD_Gly3P_dh_C"/>
    <property type="match status" value="1"/>
</dbReference>
<dbReference type="Pfam" id="PF01210">
    <property type="entry name" value="NAD_Gly3P_dh_N"/>
    <property type="match status" value="1"/>
</dbReference>
<dbReference type="PIRSF" id="PIRSF000114">
    <property type="entry name" value="Glycerol-3-P_dh"/>
    <property type="match status" value="1"/>
</dbReference>
<dbReference type="PRINTS" id="PR00077">
    <property type="entry name" value="GPDHDRGNASE"/>
</dbReference>
<dbReference type="SUPFAM" id="SSF48179">
    <property type="entry name" value="6-phosphogluconate dehydrogenase C-terminal domain-like"/>
    <property type="match status" value="1"/>
</dbReference>
<dbReference type="SUPFAM" id="SSF51735">
    <property type="entry name" value="NAD(P)-binding Rossmann-fold domains"/>
    <property type="match status" value="1"/>
</dbReference>
<dbReference type="PROSITE" id="PS00957">
    <property type="entry name" value="NAD_G3PDH"/>
    <property type="match status" value="1"/>
</dbReference>
<sequence length="339" mass="36390">MNQRNASMTVIGAGSYGTALAITLARNGHEVVLWGHDPEHIATLERDRCNAAFLPDVPFPDTLHLESDLVTALAASRNILVVVPSHVFGEVLRQIKPLMRPDARLVWATKGLEAETGRLLQDVAREALGDQIPLAVISGPTFAKELAAGLPTAISLASTDQTFADDLQQLLHCGKSFRVYSNPDFIGVQLGGAVKNVIAIGAGMSDGIGFGANARTALITRGLAEMSRLGAALGADPATFMGMAGLGDLVLTCTDNQSRNRRFGMMLGQGMDVQSAQEKIGQVVEGYRNTKEVRELAHRFGVEMPITEEIYQVLYCGKNAREAALTLLGRARKDERSSH</sequence>
<accession>Q0SYD4</accession>
<protein>
    <recommendedName>
        <fullName evidence="1">Glycerol-3-phosphate dehydrogenase [NAD(P)+]</fullName>
        <ecNumber evidence="1">1.1.1.94</ecNumber>
    </recommendedName>
    <alternativeName>
        <fullName evidence="1">NAD(P)(+)-dependent glycerol-3-phosphate dehydrogenase</fullName>
    </alternativeName>
    <alternativeName>
        <fullName evidence="1">NAD(P)H-dependent dihydroxyacetone-phosphate reductase</fullName>
    </alternativeName>
</protein>
<evidence type="ECO:0000255" key="1">
    <source>
        <dbReference type="HAMAP-Rule" id="MF_00394"/>
    </source>
</evidence>
<organism>
    <name type="scientific">Shigella flexneri serotype 5b (strain 8401)</name>
    <dbReference type="NCBI Taxonomy" id="373384"/>
    <lineage>
        <taxon>Bacteria</taxon>
        <taxon>Pseudomonadati</taxon>
        <taxon>Pseudomonadota</taxon>
        <taxon>Gammaproteobacteria</taxon>
        <taxon>Enterobacterales</taxon>
        <taxon>Enterobacteriaceae</taxon>
        <taxon>Shigella</taxon>
    </lineage>
</organism>
<comment type="function">
    <text evidence="1">Catalyzes the reduction of the glycolytic intermediate dihydroxyacetone phosphate (DHAP) to sn-glycerol 3-phosphate (G3P), the key precursor for phospholipid synthesis.</text>
</comment>
<comment type="catalytic activity">
    <reaction evidence="1">
        <text>sn-glycerol 3-phosphate + NAD(+) = dihydroxyacetone phosphate + NADH + H(+)</text>
        <dbReference type="Rhea" id="RHEA:11092"/>
        <dbReference type="ChEBI" id="CHEBI:15378"/>
        <dbReference type="ChEBI" id="CHEBI:57540"/>
        <dbReference type="ChEBI" id="CHEBI:57597"/>
        <dbReference type="ChEBI" id="CHEBI:57642"/>
        <dbReference type="ChEBI" id="CHEBI:57945"/>
        <dbReference type="EC" id="1.1.1.94"/>
    </reaction>
    <physiologicalReaction direction="right-to-left" evidence="1">
        <dbReference type="Rhea" id="RHEA:11094"/>
    </physiologicalReaction>
</comment>
<comment type="catalytic activity">
    <reaction evidence="1">
        <text>sn-glycerol 3-phosphate + NADP(+) = dihydroxyacetone phosphate + NADPH + H(+)</text>
        <dbReference type="Rhea" id="RHEA:11096"/>
        <dbReference type="ChEBI" id="CHEBI:15378"/>
        <dbReference type="ChEBI" id="CHEBI:57597"/>
        <dbReference type="ChEBI" id="CHEBI:57642"/>
        <dbReference type="ChEBI" id="CHEBI:57783"/>
        <dbReference type="ChEBI" id="CHEBI:58349"/>
        <dbReference type="EC" id="1.1.1.94"/>
    </reaction>
    <physiologicalReaction direction="right-to-left" evidence="1">
        <dbReference type="Rhea" id="RHEA:11098"/>
    </physiologicalReaction>
</comment>
<comment type="pathway">
    <text evidence="1">Membrane lipid metabolism; glycerophospholipid metabolism.</text>
</comment>
<comment type="subcellular location">
    <subcellularLocation>
        <location evidence="1">Cytoplasm</location>
    </subcellularLocation>
</comment>
<comment type="similarity">
    <text evidence="1">Belongs to the NAD-dependent glycerol-3-phosphate dehydrogenase family.</text>
</comment>
<reference key="1">
    <citation type="journal article" date="2006" name="BMC Genomics">
        <title>Complete genome sequence of Shigella flexneri 5b and comparison with Shigella flexneri 2a.</title>
        <authorList>
            <person name="Nie H."/>
            <person name="Yang F."/>
            <person name="Zhang X."/>
            <person name="Yang J."/>
            <person name="Chen L."/>
            <person name="Wang J."/>
            <person name="Xiong Z."/>
            <person name="Peng J."/>
            <person name="Sun L."/>
            <person name="Dong J."/>
            <person name="Xue Y."/>
            <person name="Xu X."/>
            <person name="Chen S."/>
            <person name="Yao Z."/>
            <person name="Shen Y."/>
            <person name="Jin Q."/>
        </authorList>
    </citation>
    <scope>NUCLEOTIDE SEQUENCE [LARGE SCALE GENOMIC DNA]</scope>
    <source>
        <strain>8401</strain>
    </source>
</reference>
<name>GPDA_SHIF8</name>